<organism>
    <name type="scientific">Brucella abortus (strain S19)</name>
    <dbReference type="NCBI Taxonomy" id="430066"/>
    <lineage>
        <taxon>Bacteria</taxon>
        <taxon>Pseudomonadati</taxon>
        <taxon>Pseudomonadota</taxon>
        <taxon>Alphaproteobacteria</taxon>
        <taxon>Hyphomicrobiales</taxon>
        <taxon>Brucellaceae</taxon>
        <taxon>Brucella/Ochrobactrum group</taxon>
        <taxon>Brucella</taxon>
    </lineage>
</organism>
<comment type="function">
    <text evidence="1">Catalyzes the transfer of the enolpyruvyl moiety of phosphoenolpyruvate (PEP) to the 5-hydroxyl of shikimate-3-phosphate (S3P) to produce enolpyruvyl shikimate-3-phosphate and inorganic phosphate.</text>
</comment>
<comment type="catalytic activity">
    <reaction evidence="1">
        <text>3-phosphoshikimate + phosphoenolpyruvate = 5-O-(1-carboxyvinyl)-3-phosphoshikimate + phosphate</text>
        <dbReference type="Rhea" id="RHEA:21256"/>
        <dbReference type="ChEBI" id="CHEBI:43474"/>
        <dbReference type="ChEBI" id="CHEBI:57701"/>
        <dbReference type="ChEBI" id="CHEBI:58702"/>
        <dbReference type="ChEBI" id="CHEBI:145989"/>
        <dbReference type="EC" id="2.5.1.19"/>
    </reaction>
    <physiologicalReaction direction="left-to-right" evidence="1">
        <dbReference type="Rhea" id="RHEA:21257"/>
    </physiologicalReaction>
</comment>
<comment type="pathway">
    <text evidence="1">Metabolic intermediate biosynthesis; chorismate biosynthesis; chorismate from D-erythrose 4-phosphate and phosphoenolpyruvate: step 6/7.</text>
</comment>
<comment type="subunit">
    <text evidence="1">Monomer.</text>
</comment>
<comment type="subcellular location">
    <subcellularLocation>
        <location evidence="1">Cytoplasm</location>
    </subcellularLocation>
</comment>
<comment type="similarity">
    <text evidence="1">Belongs to the EPSP synthase family.</text>
</comment>
<name>AROA_BRUA1</name>
<feature type="chain" id="PRO_1000099668" description="3-phosphoshikimate 1-carboxyvinyltransferase">
    <location>
        <begin position="1"/>
        <end position="450"/>
    </location>
</feature>
<feature type="active site" description="Proton acceptor" evidence="1">
    <location>
        <position position="326"/>
    </location>
</feature>
<feature type="binding site" evidence="1">
    <location>
        <position position="28"/>
    </location>
    <ligand>
        <name>3-phosphoshikimate</name>
        <dbReference type="ChEBI" id="CHEBI:145989"/>
    </ligand>
</feature>
<feature type="binding site" evidence="1">
    <location>
        <position position="28"/>
    </location>
    <ligand>
        <name>phosphoenolpyruvate</name>
        <dbReference type="ChEBI" id="CHEBI:58702"/>
    </ligand>
</feature>
<feature type="binding site" evidence="1">
    <location>
        <position position="29"/>
    </location>
    <ligand>
        <name>3-phosphoshikimate</name>
        <dbReference type="ChEBI" id="CHEBI:145989"/>
    </ligand>
</feature>
<feature type="binding site" evidence="1">
    <location>
        <position position="33"/>
    </location>
    <ligand>
        <name>3-phosphoshikimate</name>
        <dbReference type="ChEBI" id="CHEBI:145989"/>
    </ligand>
</feature>
<feature type="binding site" evidence="1">
    <location>
        <position position="100"/>
    </location>
    <ligand>
        <name>phosphoenolpyruvate</name>
        <dbReference type="ChEBI" id="CHEBI:58702"/>
    </ligand>
</feature>
<feature type="binding site" evidence="1">
    <location>
        <position position="128"/>
    </location>
    <ligand>
        <name>phosphoenolpyruvate</name>
        <dbReference type="ChEBI" id="CHEBI:58702"/>
    </ligand>
</feature>
<feature type="binding site" evidence="1">
    <location>
        <position position="173"/>
    </location>
    <ligand>
        <name>3-phosphoshikimate</name>
        <dbReference type="ChEBI" id="CHEBI:145989"/>
    </ligand>
</feature>
<feature type="binding site" evidence="1">
    <location>
        <position position="175"/>
    </location>
    <ligand>
        <name>3-phosphoshikimate</name>
        <dbReference type="ChEBI" id="CHEBI:145989"/>
    </ligand>
</feature>
<feature type="binding site" evidence="1">
    <location>
        <position position="175"/>
    </location>
    <ligand>
        <name>phosphoenolpyruvate</name>
        <dbReference type="ChEBI" id="CHEBI:58702"/>
    </ligand>
</feature>
<feature type="binding site" evidence="1">
    <location>
        <position position="326"/>
    </location>
    <ligand>
        <name>3-phosphoshikimate</name>
        <dbReference type="ChEBI" id="CHEBI:145989"/>
    </ligand>
</feature>
<feature type="binding site" evidence="1">
    <location>
        <position position="353"/>
    </location>
    <ligand>
        <name>3-phosphoshikimate</name>
        <dbReference type="ChEBI" id="CHEBI:145989"/>
    </ligand>
</feature>
<feature type="binding site" evidence="1">
    <location>
        <position position="357"/>
    </location>
    <ligand>
        <name>phosphoenolpyruvate</name>
        <dbReference type="ChEBI" id="CHEBI:58702"/>
    </ligand>
</feature>
<feature type="binding site" evidence="1">
    <location>
        <position position="402"/>
    </location>
    <ligand>
        <name>phosphoenolpyruvate</name>
        <dbReference type="ChEBI" id="CHEBI:58702"/>
    </ligand>
</feature>
<accession>B2S7T0</accession>
<reference key="1">
    <citation type="journal article" date="2008" name="PLoS ONE">
        <title>Genome sequence of Brucella abortus vaccine strain S19 compared to virulent strains yields candidate virulence genes.</title>
        <authorList>
            <person name="Crasta O.R."/>
            <person name="Folkerts O."/>
            <person name="Fei Z."/>
            <person name="Mane S.P."/>
            <person name="Evans C."/>
            <person name="Martino-Catt S."/>
            <person name="Bricker B."/>
            <person name="Yu G."/>
            <person name="Du L."/>
            <person name="Sobral B.W."/>
        </authorList>
    </citation>
    <scope>NUCLEOTIDE SEQUENCE [LARGE SCALE GENOMIC DNA]</scope>
    <source>
        <strain>S19</strain>
    </source>
</reference>
<proteinExistence type="inferred from homology"/>
<dbReference type="EC" id="2.5.1.19" evidence="1"/>
<dbReference type="EMBL" id="CP000887">
    <property type="protein sequence ID" value="ACD71584.1"/>
    <property type="molecule type" value="Genomic_DNA"/>
</dbReference>
<dbReference type="RefSeq" id="WP_002965272.1">
    <property type="nucleotide sequence ID" value="NC_010742.1"/>
</dbReference>
<dbReference type="SMR" id="B2S7T0"/>
<dbReference type="GeneID" id="93017491"/>
<dbReference type="KEGG" id="bmc:BAbS19_I00220"/>
<dbReference type="HOGENOM" id="CLU_024321_0_1_5"/>
<dbReference type="UniPathway" id="UPA00053">
    <property type="reaction ID" value="UER00089"/>
</dbReference>
<dbReference type="Proteomes" id="UP000002565">
    <property type="component" value="Chromosome 1"/>
</dbReference>
<dbReference type="GO" id="GO:0005737">
    <property type="term" value="C:cytoplasm"/>
    <property type="evidence" value="ECO:0007669"/>
    <property type="project" value="UniProtKB-SubCell"/>
</dbReference>
<dbReference type="GO" id="GO:0003866">
    <property type="term" value="F:3-phosphoshikimate 1-carboxyvinyltransferase activity"/>
    <property type="evidence" value="ECO:0007669"/>
    <property type="project" value="UniProtKB-UniRule"/>
</dbReference>
<dbReference type="GO" id="GO:0008652">
    <property type="term" value="P:amino acid biosynthetic process"/>
    <property type="evidence" value="ECO:0007669"/>
    <property type="project" value="UniProtKB-KW"/>
</dbReference>
<dbReference type="GO" id="GO:0009073">
    <property type="term" value="P:aromatic amino acid family biosynthetic process"/>
    <property type="evidence" value="ECO:0007669"/>
    <property type="project" value="UniProtKB-KW"/>
</dbReference>
<dbReference type="GO" id="GO:0009423">
    <property type="term" value="P:chorismate biosynthetic process"/>
    <property type="evidence" value="ECO:0007669"/>
    <property type="project" value="UniProtKB-UniRule"/>
</dbReference>
<dbReference type="CDD" id="cd01556">
    <property type="entry name" value="EPSP_synthase"/>
    <property type="match status" value="1"/>
</dbReference>
<dbReference type="FunFam" id="3.65.10.10:FF:000006">
    <property type="entry name" value="3-phosphoshikimate 1-carboxyvinyltransferase"/>
    <property type="match status" value="1"/>
</dbReference>
<dbReference type="Gene3D" id="3.65.10.10">
    <property type="entry name" value="Enolpyruvate transferase domain"/>
    <property type="match status" value="2"/>
</dbReference>
<dbReference type="HAMAP" id="MF_00210">
    <property type="entry name" value="EPSP_synth"/>
    <property type="match status" value="1"/>
</dbReference>
<dbReference type="InterPro" id="IPR001986">
    <property type="entry name" value="Enolpyruvate_Tfrase_dom"/>
</dbReference>
<dbReference type="InterPro" id="IPR036968">
    <property type="entry name" value="Enolpyruvate_Tfrase_sf"/>
</dbReference>
<dbReference type="InterPro" id="IPR006264">
    <property type="entry name" value="EPSP_synthase"/>
</dbReference>
<dbReference type="InterPro" id="IPR023193">
    <property type="entry name" value="EPSP_synthase_CS"/>
</dbReference>
<dbReference type="InterPro" id="IPR013792">
    <property type="entry name" value="RNA3'P_cycl/enolpyr_Trfase_a/b"/>
</dbReference>
<dbReference type="NCBIfam" id="TIGR01356">
    <property type="entry name" value="aroA"/>
    <property type="match status" value="1"/>
</dbReference>
<dbReference type="PANTHER" id="PTHR21090">
    <property type="entry name" value="AROM/DEHYDROQUINATE SYNTHASE"/>
    <property type="match status" value="1"/>
</dbReference>
<dbReference type="PANTHER" id="PTHR21090:SF5">
    <property type="entry name" value="PENTAFUNCTIONAL AROM POLYPEPTIDE"/>
    <property type="match status" value="1"/>
</dbReference>
<dbReference type="Pfam" id="PF00275">
    <property type="entry name" value="EPSP_synthase"/>
    <property type="match status" value="1"/>
</dbReference>
<dbReference type="PIRSF" id="PIRSF000505">
    <property type="entry name" value="EPSPS"/>
    <property type="match status" value="1"/>
</dbReference>
<dbReference type="SUPFAM" id="SSF55205">
    <property type="entry name" value="EPT/RTPC-like"/>
    <property type="match status" value="1"/>
</dbReference>
<dbReference type="PROSITE" id="PS00104">
    <property type="entry name" value="EPSP_SYNTHASE_1"/>
    <property type="match status" value="1"/>
</dbReference>
<dbReference type="PROSITE" id="PS00885">
    <property type="entry name" value="EPSP_SYNTHASE_2"/>
    <property type="match status" value="1"/>
</dbReference>
<keyword id="KW-0028">Amino-acid biosynthesis</keyword>
<keyword id="KW-0057">Aromatic amino acid biosynthesis</keyword>
<keyword id="KW-0963">Cytoplasm</keyword>
<keyword id="KW-0808">Transferase</keyword>
<protein>
    <recommendedName>
        <fullName evidence="1">3-phosphoshikimate 1-carboxyvinyltransferase</fullName>
        <ecNumber evidence="1">2.5.1.19</ecNumber>
    </recommendedName>
    <alternativeName>
        <fullName evidence="1">5-enolpyruvylshikimate-3-phosphate synthase</fullName>
        <shortName evidence="1">EPSP synthase</shortName>
        <shortName evidence="1">EPSPS</shortName>
    </alternativeName>
</protein>
<evidence type="ECO:0000255" key="1">
    <source>
        <dbReference type="HAMAP-Rule" id="MF_00210"/>
    </source>
</evidence>
<sequence>MSHSACPKPATARHSQALTGEIRIPGDKSISHRSFMFGGLASGKTRITGLLEGEDVINTGRAMQAMGARIRKEGDVWIINGVGNGCLLQPEAPLDFGNAGTGARLTMGLVGTYDMKTSFIGDASLSKRPMGRVLNPLREMGVQVEAAEGDRMPLTLIGPRTANPIAYRVPMASAQVKSAVLLAGLNTPGVTTVIEPVMTRDHTEKMLQGFGADLTVETDKDGVRHIRIVGQGKLTGQTIDVPGDPSSTAFPLVAALLVEGSEVTIRNVLMNPTRTGLILTLQEMGADIEIIDPRLAGGEDVADLRVKASKLKGVVVPPERAPSMIDEYPVLAIAASFAEGETVMDGLDELRVKESDRLAAVARGLEANGVDCTEGEMSLTVRGRPGGKGLGGGTVATHLDHRIAMSFLVMGLASEKPVTVDDSTMIATSFPEFMGMMAGLGAKIAESGAE</sequence>
<gene>
    <name evidence="1" type="primary">aroA</name>
    <name type="ordered locus">BAbS19_I00220</name>
</gene>